<dbReference type="EC" id="4.1.1.11" evidence="1"/>
<dbReference type="EMBL" id="CP000308">
    <property type="protein sequence ID" value="ABG14866.1"/>
    <property type="molecule type" value="Genomic_DNA"/>
</dbReference>
<dbReference type="RefSeq" id="WP_002209347.1">
    <property type="nucleotide sequence ID" value="NZ_CP009906.1"/>
</dbReference>
<dbReference type="SMR" id="Q1C3V6"/>
<dbReference type="GeneID" id="57975306"/>
<dbReference type="KEGG" id="ypa:YPA_2904"/>
<dbReference type="UniPathway" id="UPA00028">
    <property type="reaction ID" value="UER00002"/>
</dbReference>
<dbReference type="Proteomes" id="UP000001971">
    <property type="component" value="Chromosome"/>
</dbReference>
<dbReference type="GO" id="GO:0005829">
    <property type="term" value="C:cytosol"/>
    <property type="evidence" value="ECO:0007669"/>
    <property type="project" value="TreeGrafter"/>
</dbReference>
<dbReference type="GO" id="GO:0004068">
    <property type="term" value="F:aspartate 1-decarboxylase activity"/>
    <property type="evidence" value="ECO:0007669"/>
    <property type="project" value="UniProtKB-UniRule"/>
</dbReference>
<dbReference type="GO" id="GO:0006523">
    <property type="term" value="P:alanine biosynthetic process"/>
    <property type="evidence" value="ECO:0007669"/>
    <property type="project" value="InterPro"/>
</dbReference>
<dbReference type="GO" id="GO:0015940">
    <property type="term" value="P:pantothenate biosynthetic process"/>
    <property type="evidence" value="ECO:0007669"/>
    <property type="project" value="UniProtKB-UniRule"/>
</dbReference>
<dbReference type="CDD" id="cd06919">
    <property type="entry name" value="Asp_decarbox"/>
    <property type="match status" value="1"/>
</dbReference>
<dbReference type="FunFam" id="2.40.40.20:FF:000004">
    <property type="entry name" value="Aspartate 1-decarboxylase"/>
    <property type="match status" value="1"/>
</dbReference>
<dbReference type="Gene3D" id="2.40.40.20">
    <property type="match status" value="1"/>
</dbReference>
<dbReference type="HAMAP" id="MF_00446">
    <property type="entry name" value="PanD"/>
    <property type="match status" value="1"/>
</dbReference>
<dbReference type="InterPro" id="IPR009010">
    <property type="entry name" value="Asp_de-COase-like_dom_sf"/>
</dbReference>
<dbReference type="InterPro" id="IPR003190">
    <property type="entry name" value="Asp_decarbox"/>
</dbReference>
<dbReference type="NCBIfam" id="TIGR00223">
    <property type="entry name" value="panD"/>
    <property type="match status" value="1"/>
</dbReference>
<dbReference type="PANTHER" id="PTHR21012">
    <property type="entry name" value="ASPARTATE 1-DECARBOXYLASE"/>
    <property type="match status" value="1"/>
</dbReference>
<dbReference type="PANTHER" id="PTHR21012:SF0">
    <property type="entry name" value="ASPARTATE 1-DECARBOXYLASE"/>
    <property type="match status" value="1"/>
</dbReference>
<dbReference type="Pfam" id="PF02261">
    <property type="entry name" value="Asp_decarbox"/>
    <property type="match status" value="1"/>
</dbReference>
<dbReference type="PIRSF" id="PIRSF006246">
    <property type="entry name" value="Asp_decarbox"/>
    <property type="match status" value="1"/>
</dbReference>
<dbReference type="SUPFAM" id="SSF50692">
    <property type="entry name" value="ADC-like"/>
    <property type="match status" value="1"/>
</dbReference>
<comment type="function">
    <text evidence="1">Catalyzes the pyruvoyl-dependent decarboxylation of aspartate to produce beta-alanine.</text>
</comment>
<comment type="catalytic activity">
    <reaction evidence="1">
        <text>L-aspartate + H(+) = beta-alanine + CO2</text>
        <dbReference type="Rhea" id="RHEA:19497"/>
        <dbReference type="ChEBI" id="CHEBI:15378"/>
        <dbReference type="ChEBI" id="CHEBI:16526"/>
        <dbReference type="ChEBI" id="CHEBI:29991"/>
        <dbReference type="ChEBI" id="CHEBI:57966"/>
        <dbReference type="EC" id="4.1.1.11"/>
    </reaction>
</comment>
<comment type="cofactor">
    <cofactor evidence="1">
        <name>pyruvate</name>
        <dbReference type="ChEBI" id="CHEBI:15361"/>
    </cofactor>
    <text evidence="1">Binds 1 pyruvoyl group covalently per subunit.</text>
</comment>
<comment type="pathway">
    <text evidence="1">Cofactor biosynthesis; (R)-pantothenate biosynthesis; beta-alanine from L-aspartate: step 1/1.</text>
</comment>
<comment type="subunit">
    <text evidence="1">Heterooctamer of four alpha and four beta subunits.</text>
</comment>
<comment type="subcellular location">
    <subcellularLocation>
        <location evidence="1">Cytoplasm</location>
    </subcellularLocation>
</comment>
<comment type="PTM">
    <text evidence="1">Is synthesized initially as an inactive proenzyme, which is activated by self-cleavage at a specific serine bond to produce a beta-subunit with a hydroxyl group at its C-terminus and an alpha-subunit with a pyruvoyl group at its N-terminus.</text>
</comment>
<comment type="similarity">
    <text evidence="1">Belongs to the PanD family.</text>
</comment>
<evidence type="ECO:0000255" key="1">
    <source>
        <dbReference type="HAMAP-Rule" id="MF_00446"/>
    </source>
</evidence>
<gene>
    <name evidence="1" type="primary">panD</name>
    <name type="ordered locus">YPA_2904</name>
</gene>
<keyword id="KW-0068">Autocatalytic cleavage</keyword>
<keyword id="KW-0963">Cytoplasm</keyword>
<keyword id="KW-0210">Decarboxylase</keyword>
<keyword id="KW-0456">Lyase</keyword>
<keyword id="KW-0566">Pantothenate biosynthesis</keyword>
<keyword id="KW-0670">Pyruvate</keyword>
<keyword id="KW-0704">Schiff base</keyword>
<keyword id="KW-0865">Zymogen</keyword>
<name>PAND_YERPA</name>
<feature type="chain" id="PRO_0000307083" description="Aspartate 1-decarboxylase beta chain" evidence="1">
    <location>
        <begin position="1"/>
        <end position="24"/>
    </location>
</feature>
<feature type="chain" id="PRO_0000307084" description="Aspartate 1-decarboxylase alpha chain" evidence="1">
    <location>
        <begin position="25"/>
        <end position="126"/>
    </location>
</feature>
<feature type="active site" description="Schiff-base intermediate with substrate; via pyruvic acid" evidence="1">
    <location>
        <position position="25"/>
    </location>
</feature>
<feature type="active site" description="Proton donor" evidence="1">
    <location>
        <position position="58"/>
    </location>
</feature>
<feature type="binding site" evidence="1">
    <location>
        <position position="57"/>
    </location>
    <ligand>
        <name>substrate</name>
    </ligand>
</feature>
<feature type="binding site" evidence="1">
    <location>
        <begin position="73"/>
        <end position="75"/>
    </location>
    <ligand>
        <name>substrate</name>
    </ligand>
</feature>
<feature type="modified residue" description="Pyruvic acid (Ser)" evidence="1">
    <location>
        <position position="25"/>
    </location>
</feature>
<organism>
    <name type="scientific">Yersinia pestis bv. Antiqua (strain Antiqua)</name>
    <dbReference type="NCBI Taxonomy" id="360102"/>
    <lineage>
        <taxon>Bacteria</taxon>
        <taxon>Pseudomonadati</taxon>
        <taxon>Pseudomonadota</taxon>
        <taxon>Gammaproteobacteria</taxon>
        <taxon>Enterobacterales</taxon>
        <taxon>Yersiniaceae</taxon>
        <taxon>Yersinia</taxon>
    </lineage>
</organism>
<proteinExistence type="inferred from homology"/>
<protein>
    <recommendedName>
        <fullName evidence="1">Aspartate 1-decarboxylase</fullName>
        <ecNumber evidence="1">4.1.1.11</ecNumber>
    </recommendedName>
    <alternativeName>
        <fullName evidence="1">Aspartate alpha-decarboxylase</fullName>
    </alternativeName>
    <component>
        <recommendedName>
            <fullName evidence="1">Aspartate 1-decarboxylase beta chain</fullName>
        </recommendedName>
    </component>
    <component>
        <recommendedName>
            <fullName evidence="1">Aspartate 1-decarboxylase alpha chain</fullName>
        </recommendedName>
    </component>
</protein>
<sequence length="126" mass="13906">MIRTMLQGKLHRVKVTQADLHYEGSCAIDQDFLEAAGILEYEAIDIYNVDNGQRFSTYAIAAERGSRIISVNGAAARCACVGDKLIICSYVQMSYAAARLHHPKVAYFEGENQLQRKAKAVPVQVA</sequence>
<reference key="1">
    <citation type="journal article" date="2006" name="J. Bacteriol.">
        <title>Complete genome sequence of Yersinia pestis strains Antiqua and Nepal516: evidence of gene reduction in an emerging pathogen.</title>
        <authorList>
            <person name="Chain P.S.G."/>
            <person name="Hu P."/>
            <person name="Malfatti S.A."/>
            <person name="Radnedge L."/>
            <person name="Larimer F."/>
            <person name="Vergez L.M."/>
            <person name="Worsham P."/>
            <person name="Chu M.C."/>
            <person name="Andersen G.L."/>
        </authorList>
    </citation>
    <scope>NUCLEOTIDE SEQUENCE [LARGE SCALE GENOMIC DNA]</scope>
    <source>
        <strain>Antiqua</strain>
    </source>
</reference>
<accession>Q1C3V6</accession>